<dbReference type="EC" id="1.8.1.2" evidence="1"/>
<dbReference type="EMBL" id="AE016795">
    <property type="protein sequence ID" value="AAO09852.1"/>
    <property type="molecule type" value="Genomic_DNA"/>
</dbReference>
<dbReference type="RefSeq" id="WP_011079377.1">
    <property type="nucleotide sequence ID" value="NC_004459.3"/>
</dbReference>
<dbReference type="SMR" id="Q8DCK1"/>
<dbReference type="KEGG" id="vvu:VV1_1403"/>
<dbReference type="HOGENOM" id="CLU_001975_3_2_6"/>
<dbReference type="UniPathway" id="UPA00140">
    <property type="reaction ID" value="UER00207"/>
</dbReference>
<dbReference type="Proteomes" id="UP000002275">
    <property type="component" value="Chromosome 1"/>
</dbReference>
<dbReference type="GO" id="GO:0009337">
    <property type="term" value="C:sulfite reductase complex (NADPH)"/>
    <property type="evidence" value="ECO:0007669"/>
    <property type="project" value="InterPro"/>
</dbReference>
<dbReference type="GO" id="GO:0051539">
    <property type="term" value="F:4 iron, 4 sulfur cluster binding"/>
    <property type="evidence" value="ECO:0007669"/>
    <property type="project" value="UniProtKB-KW"/>
</dbReference>
<dbReference type="GO" id="GO:0020037">
    <property type="term" value="F:heme binding"/>
    <property type="evidence" value="ECO:0007669"/>
    <property type="project" value="InterPro"/>
</dbReference>
<dbReference type="GO" id="GO:0046872">
    <property type="term" value="F:metal ion binding"/>
    <property type="evidence" value="ECO:0007669"/>
    <property type="project" value="UniProtKB-KW"/>
</dbReference>
<dbReference type="GO" id="GO:0050661">
    <property type="term" value="F:NADP binding"/>
    <property type="evidence" value="ECO:0007669"/>
    <property type="project" value="InterPro"/>
</dbReference>
<dbReference type="GO" id="GO:0050311">
    <property type="term" value="F:sulfite reductase (ferredoxin) activity"/>
    <property type="evidence" value="ECO:0007669"/>
    <property type="project" value="TreeGrafter"/>
</dbReference>
<dbReference type="GO" id="GO:0004783">
    <property type="term" value="F:sulfite reductase (NADPH) activity"/>
    <property type="evidence" value="ECO:0007669"/>
    <property type="project" value="UniProtKB-UniRule"/>
</dbReference>
<dbReference type="GO" id="GO:0019344">
    <property type="term" value="P:cysteine biosynthetic process"/>
    <property type="evidence" value="ECO:0007669"/>
    <property type="project" value="UniProtKB-KW"/>
</dbReference>
<dbReference type="GO" id="GO:0070814">
    <property type="term" value="P:hydrogen sulfide biosynthetic process"/>
    <property type="evidence" value="ECO:0007669"/>
    <property type="project" value="UniProtKB-UniRule"/>
</dbReference>
<dbReference type="GO" id="GO:0000103">
    <property type="term" value="P:sulfate assimilation"/>
    <property type="evidence" value="ECO:0007669"/>
    <property type="project" value="UniProtKB-UniRule"/>
</dbReference>
<dbReference type="FunFam" id="3.30.413.10:FF:000003">
    <property type="entry name" value="Sulfite reductase [NADPH] hemoprotein beta-component"/>
    <property type="match status" value="1"/>
</dbReference>
<dbReference type="FunFam" id="3.30.413.10:FF:000004">
    <property type="entry name" value="Sulfite reductase [NADPH] hemoprotein beta-component"/>
    <property type="match status" value="1"/>
</dbReference>
<dbReference type="Gene3D" id="3.30.413.10">
    <property type="entry name" value="Sulfite Reductase Hemoprotein, domain 1"/>
    <property type="match status" value="2"/>
</dbReference>
<dbReference type="HAMAP" id="MF_01540">
    <property type="entry name" value="CysI"/>
    <property type="match status" value="1"/>
</dbReference>
<dbReference type="InterPro" id="IPR011786">
    <property type="entry name" value="CysI"/>
</dbReference>
<dbReference type="InterPro" id="IPR005117">
    <property type="entry name" value="NiRdtase/SiRdtase_haem-b_fer"/>
</dbReference>
<dbReference type="InterPro" id="IPR036136">
    <property type="entry name" value="Nit/Sulf_reduc_fer-like_dom_sf"/>
</dbReference>
<dbReference type="InterPro" id="IPR006067">
    <property type="entry name" value="NO2/SO3_Rdtase_4Fe4S_dom"/>
</dbReference>
<dbReference type="InterPro" id="IPR045169">
    <property type="entry name" value="NO2/SO3_Rdtase_4Fe4S_prot"/>
</dbReference>
<dbReference type="InterPro" id="IPR045854">
    <property type="entry name" value="NO2/SO3_Rdtase_4Fe4S_sf"/>
</dbReference>
<dbReference type="InterPro" id="IPR006066">
    <property type="entry name" value="NO2/SO3_Rdtase_FeS/sirohaem_BS"/>
</dbReference>
<dbReference type="NCBIfam" id="TIGR02041">
    <property type="entry name" value="CysI"/>
    <property type="match status" value="1"/>
</dbReference>
<dbReference type="NCBIfam" id="NF010029">
    <property type="entry name" value="PRK13504.1"/>
    <property type="match status" value="1"/>
</dbReference>
<dbReference type="PANTHER" id="PTHR11493:SF47">
    <property type="entry name" value="SULFITE REDUCTASE [NADPH] SUBUNIT BETA"/>
    <property type="match status" value="1"/>
</dbReference>
<dbReference type="PANTHER" id="PTHR11493">
    <property type="entry name" value="SULFITE REDUCTASE [NADPH] SUBUNIT BETA-RELATED"/>
    <property type="match status" value="1"/>
</dbReference>
<dbReference type="Pfam" id="PF01077">
    <property type="entry name" value="NIR_SIR"/>
    <property type="match status" value="1"/>
</dbReference>
<dbReference type="Pfam" id="PF03460">
    <property type="entry name" value="NIR_SIR_ferr"/>
    <property type="match status" value="2"/>
</dbReference>
<dbReference type="PRINTS" id="PR00397">
    <property type="entry name" value="SIROHAEM"/>
</dbReference>
<dbReference type="SUPFAM" id="SSF56014">
    <property type="entry name" value="Nitrite and sulphite reductase 4Fe-4S domain-like"/>
    <property type="match status" value="2"/>
</dbReference>
<dbReference type="SUPFAM" id="SSF55124">
    <property type="entry name" value="Nitrite/Sulfite reductase N-terminal domain-like"/>
    <property type="match status" value="2"/>
</dbReference>
<dbReference type="PROSITE" id="PS00365">
    <property type="entry name" value="NIR_SIR"/>
    <property type="match status" value="1"/>
</dbReference>
<accession>Q8DCK1</accession>
<reference key="1">
    <citation type="submission" date="2002-12" db="EMBL/GenBank/DDBJ databases">
        <title>Complete genome sequence of Vibrio vulnificus CMCP6.</title>
        <authorList>
            <person name="Rhee J.H."/>
            <person name="Kim S.Y."/>
            <person name="Chung S.S."/>
            <person name="Kim J.J."/>
            <person name="Moon Y.H."/>
            <person name="Jeong H."/>
            <person name="Choy H.E."/>
        </authorList>
    </citation>
    <scope>NUCLEOTIDE SEQUENCE [LARGE SCALE GENOMIC DNA]</scope>
    <source>
        <strain>CMCP6</strain>
    </source>
</reference>
<sequence length="578" mass="64943">MTFSIENNKQVVLGEELGKLSDNERLKTQSNFLRGTIEQDLQDRITGGFTADNFQLIRFHGMYQQDDRDIRNERAKQKLEPLHNVMLRARMPGGIITPKQWLAIDKFATEHSLYGSIRLTTRQTFQFHGVLKPNIKLMHQTLNSIGIDSIATAGDVNRNVLCTTNPVESELHQEAYEWAKKISEHLLPKTKAYAEIWLDGEKVETTEDDEPILGKTYLPRKFKTTVVIPPQNDVDVHANDLNFVAIAEKGKLIGFNVLVGGGLAMTHGDTSTYPRRADDFGYIPLEKTLDVAAAVVTTQRDWGNRSNRKNAKTKYTLDRVGTDVFKAEVEKRAGIKFEVSRPYEFTERGDRIGWVEGIDGKHHLTLFIENGRLLDYPGKPLKTGVAEIAKIHKGDFRMTANQNLIVAGVSKSNKAKIEKLAREHGLMDEGVSEQRKNAMACVAFPTCPLAMAEAERFLPQFVTDVEGILDKHGLDKEDNIILRVTGCPNGCGRAMLAEIGLVGKAPGRYNLHLGGNRGGTRVPKMYKENITDKQILEEIDQLVGRWANERLPNECFGDFTVRVGIIEEVIISKRDFYA</sequence>
<gene>
    <name evidence="1" type="primary">cysI</name>
    <name type="ordered locus">VV1_1403</name>
</gene>
<comment type="function">
    <text evidence="1">Component of the sulfite reductase complex that catalyzes the 6-electron reduction of sulfite to sulfide. This is one of several activities required for the biosynthesis of L-cysteine from sulfate.</text>
</comment>
<comment type="catalytic activity">
    <reaction evidence="1">
        <text>hydrogen sulfide + 3 NADP(+) + 3 H2O = sulfite + 3 NADPH + 4 H(+)</text>
        <dbReference type="Rhea" id="RHEA:13801"/>
        <dbReference type="ChEBI" id="CHEBI:15377"/>
        <dbReference type="ChEBI" id="CHEBI:15378"/>
        <dbReference type="ChEBI" id="CHEBI:17359"/>
        <dbReference type="ChEBI" id="CHEBI:29919"/>
        <dbReference type="ChEBI" id="CHEBI:57783"/>
        <dbReference type="ChEBI" id="CHEBI:58349"/>
        <dbReference type="EC" id="1.8.1.2"/>
    </reaction>
</comment>
<comment type="cofactor">
    <cofactor evidence="1">
        <name>siroheme</name>
        <dbReference type="ChEBI" id="CHEBI:60052"/>
    </cofactor>
    <text evidence="1">Binds 1 siroheme per subunit.</text>
</comment>
<comment type="cofactor">
    <cofactor evidence="1">
        <name>[4Fe-4S] cluster</name>
        <dbReference type="ChEBI" id="CHEBI:49883"/>
    </cofactor>
    <text evidence="1">Binds 1 [4Fe-4S] cluster per subunit.</text>
</comment>
<comment type="pathway">
    <text evidence="1">Sulfur metabolism; hydrogen sulfide biosynthesis; hydrogen sulfide from sulfite (NADPH route): step 1/1.</text>
</comment>
<comment type="subunit">
    <text evidence="1">Alpha(8)-beta(8). The alpha component is a flavoprotein, the beta component is a hemoprotein.</text>
</comment>
<comment type="similarity">
    <text evidence="1">Belongs to the nitrite and sulfite reductase 4Fe-4S domain family.</text>
</comment>
<feature type="chain" id="PRO_0000199915" description="Sulfite reductase [NADPH] hemoprotein beta-component">
    <location>
        <begin position="1"/>
        <end position="578"/>
    </location>
</feature>
<feature type="binding site" evidence="1">
    <location>
        <position position="441"/>
    </location>
    <ligand>
        <name>[4Fe-4S] cluster</name>
        <dbReference type="ChEBI" id="CHEBI:49883"/>
    </ligand>
</feature>
<feature type="binding site" evidence="1">
    <location>
        <position position="447"/>
    </location>
    <ligand>
        <name>[4Fe-4S] cluster</name>
        <dbReference type="ChEBI" id="CHEBI:49883"/>
    </ligand>
</feature>
<feature type="binding site" evidence="1">
    <location>
        <position position="487"/>
    </location>
    <ligand>
        <name>[4Fe-4S] cluster</name>
        <dbReference type="ChEBI" id="CHEBI:49883"/>
    </ligand>
</feature>
<feature type="binding site" evidence="1">
    <location>
        <position position="491"/>
    </location>
    <ligand>
        <name>[4Fe-4S] cluster</name>
        <dbReference type="ChEBI" id="CHEBI:49883"/>
    </ligand>
</feature>
<feature type="binding site" description="axial binding residue" evidence="1">
    <location>
        <position position="491"/>
    </location>
    <ligand>
        <name>siroheme</name>
        <dbReference type="ChEBI" id="CHEBI:60052"/>
    </ligand>
    <ligandPart>
        <name>Fe</name>
        <dbReference type="ChEBI" id="CHEBI:18248"/>
    </ligandPart>
</feature>
<keyword id="KW-0004">4Fe-4S</keyword>
<keyword id="KW-0028">Amino-acid biosynthesis</keyword>
<keyword id="KW-0198">Cysteine biosynthesis</keyword>
<keyword id="KW-0349">Heme</keyword>
<keyword id="KW-0408">Iron</keyword>
<keyword id="KW-0411">Iron-sulfur</keyword>
<keyword id="KW-0479">Metal-binding</keyword>
<keyword id="KW-0521">NADP</keyword>
<keyword id="KW-0560">Oxidoreductase</keyword>
<evidence type="ECO:0000255" key="1">
    <source>
        <dbReference type="HAMAP-Rule" id="MF_01540"/>
    </source>
</evidence>
<organism>
    <name type="scientific">Vibrio vulnificus (strain CMCP6)</name>
    <dbReference type="NCBI Taxonomy" id="216895"/>
    <lineage>
        <taxon>Bacteria</taxon>
        <taxon>Pseudomonadati</taxon>
        <taxon>Pseudomonadota</taxon>
        <taxon>Gammaproteobacteria</taxon>
        <taxon>Vibrionales</taxon>
        <taxon>Vibrionaceae</taxon>
        <taxon>Vibrio</taxon>
    </lineage>
</organism>
<name>CYSI_VIBVU</name>
<protein>
    <recommendedName>
        <fullName evidence="1">Sulfite reductase [NADPH] hemoprotein beta-component</fullName>
        <shortName evidence="1">SiR-HP</shortName>
        <shortName evidence="1">SiRHP</shortName>
        <ecNumber evidence="1">1.8.1.2</ecNumber>
    </recommendedName>
</protein>
<proteinExistence type="inferred from homology"/>